<gene>
    <name evidence="1" type="primary">recO</name>
    <name type="ordered locus">A1I_06345</name>
</gene>
<dbReference type="EMBL" id="CP000849">
    <property type="protein sequence ID" value="ABV79587.1"/>
    <property type="molecule type" value="Genomic_DNA"/>
</dbReference>
<dbReference type="RefSeq" id="WP_011476984.1">
    <property type="nucleotide sequence ID" value="NC_009883.1"/>
</dbReference>
<dbReference type="SMR" id="A8GXI7"/>
<dbReference type="KEGG" id="rbo:A1I_06345"/>
<dbReference type="HOGENOM" id="CLU_086029_0_0_5"/>
<dbReference type="GO" id="GO:0043590">
    <property type="term" value="C:bacterial nucleoid"/>
    <property type="evidence" value="ECO:0007669"/>
    <property type="project" value="TreeGrafter"/>
</dbReference>
<dbReference type="GO" id="GO:0006310">
    <property type="term" value="P:DNA recombination"/>
    <property type="evidence" value="ECO:0007669"/>
    <property type="project" value="UniProtKB-UniRule"/>
</dbReference>
<dbReference type="GO" id="GO:0006302">
    <property type="term" value="P:double-strand break repair"/>
    <property type="evidence" value="ECO:0007669"/>
    <property type="project" value="TreeGrafter"/>
</dbReference>
<dbReference type="Gene3D" id="2.40.50.140">
    <property type="entry name" value="Nucleic acid-binding proteins"/>
    <property type="match status" value="1"/>
</dbReference>
<dbReference type="Gene3D" id="1.20.1440.120">
    <property type="entry name" value="Recombination protein O, C-terminal domain"/>
    <property type="match status" value="1"/>
</dbReference>
<dbReference type="HAMAP" id="MF_00201">
    <property type="entry name" value="RecO"/>
    <property type="match status" value="1"/>
</dbReference>
<dbReference type="InterPro" id="IPR037278">
    <property type="entry name" value="ARFGAP/RecO"/>
</dbReference>
<dbReference type="InterPro" id="IPR022572">
    <property type="entry name" value="DNA_rep/recomb_RecO_N"/>
</dbReference>
<dbReference type="InterPro" id="IPR012340">
    <property type="entry name" value="NA-bd_OB-fold"/>
</dbReference>
<dbReference type="InterPro" id="IPR003717">
    <property type="entry name" value="RecO"/>
</dbReference>
<dbReference type="InterPro" id="IPR042242">
    <property type="entry name" value="RecO_C"/>
</dbReference>
<dbReference type="NCBIfam" id="TIGR00613">
    <property type="entry name" value="reco"/>
    <property type="match status" value="1"/>
</dbReference>
<dbReference type="PANTHER" id="PTHR33991">
    <property type="entry name" value="DNA REPAIR PROTEIN RECO"/>
    <property type="match status" value="1"/>
</dbReference>
<dbReference type="PANTHER" id="PTHR33991:SF1">
    <property type="entry name" value="DNA REPAIR PROTEIN RECO"/>
    <property type="match status" value="1"/>
</dbReference>
<dbReference type="Pfam" id="PF02565">
    <property type="entry name" value="RecO_C"/>
    <property type="match status" value="1"/>
</dbReference>
<dbReference type="Pfam" id="PF11967">
    <property type="entry name" value="RecO_N"/>
    <property type="match status" value="1"/>
</dbReference>
<dbReference type="SUPFAM" id="SSF57863">
    <property type="entry name" value="ArfGap/RecO-like zinc finger"/>
    <property type="match status" value="1"/>
</dbReference>
<dbReference type="SUPFAM" id="SSF50249">
    <property type="entry name" value="Nucleic acid-binding proteins"/>
    <property type="match status" value="1"/>
</dbReference>
<organism>
    <name type="scientific">Rickettsia bellii (strain OSU 85-389)</name>
    <dbReference type="NCBI Taxonomy" id="391896"/>
    <lineage>
        <taxon>Bacteria</taxon>
        <taxon>Pseudomonadati</taxon>
        <taxon>Pseudomonadota</taxon>
        <taxon>Alphaproteobacteria</taxon>
        <taxon>Rickettsiales</taxon>
        <taxon>Rickettsiaceae</taxon>
        <taxon>Rickettsieae</taxon>
        <taxon>Rickettsia</taxon>
        <taxon>belli group</taxon>
    </lineage>
</organism>
<comment type="function">
    <text evidence="1">Involved in DNA repair and RecF pathway recombination.</text>
</comment>
<comment type="similarity">
    <text evidence="1">Belongs to the RecO family.</text>
</comment>
<proteinExistence type="inferred from homology"/>
<keyword id="KW-0227">DNA damage</keyword>
<keyword id="KW-0233">DNA recombination</keyword>
<keyword id="KW-0234">DNA repair</keyword>
<evidence type="ECO:0000255" key="1">
    <source>
        <dbReference type="HAMAP-Rule" id="MF_00201"/>
    </source>
</evidence>
<accession>A8GXI7</accession>
<reference key="1">
    <citation type="submission" date="2007-09" db="EMBL/GenBank/DDBJ databases">
        <title>Complete genome sequencing of Rickettsia bellii.</title>
        <authorList>
            <person name="Madan A."/>
            <person name="Lee H."/>
            <person name="Madan A."/>
            <person name="Yoon J.-G."/>
            <person name="Ryu G.-Y."/>
            <person name="Dasch G."/>
            <person name="Ereemeva M."/>
        </authorList>
    </citation>
    <scope>NUCLEOTIDE SEQUENCE [LARGE SCALE GENOMIC DNA]</scope>
    <source>
        <strain>OSU 85-389</strain>
    </source>
</reference>
<sequence>MNIKDIGVIIAKKPLKENTFIITVFTKNHGLYSGVAKESSKKSKFIYQEGNVVDFLWQARLHEHIGIAKCELVKSYIGHFIINKAKLYAFNSVISLIKELFHEREEHYNFFSLLINYLDNLAKNFCFHDYINFELALLAEMGYELDFTKCGVSNTTQDLAYLSPKSGRAVSYEVGAPYKDKLLPLPKFLLSGNDKITLEEKRQALNLTSYFFNRYLFHNHRQPEIRQVFVEYILEKDAITA</sequence>
<protein>
    <recommendedName>
        <fullName evidence="1">DNA repair protein RecO</fullName>
    </recommendedName>
    <alternativeName>
        <fullName evidence="1">Recombination protein O</fullName>
    </alternativeName>
</protein>
<name>RECO_RICB8</name>
<feature type="chain" id="PRO_1000193417" description="DNA repair protein RecO">
    <location>
        <begin position="1"/>
        <end position="241"/>
    </location>
</feature>